<accession>Q1CIY7</accession>
<accession>C4GT10</accession>
<comment type="function">
    <text evidence="1">Part of a membrane-bound complex that couples electron transfer with translocation of ions across the membrane.</text>
</comment>
<comment type="subunit">
    <text evidence="1">The complex is composed of six subunits: RnfA, RnfB, RnfC, RnfD, RnfE and RnfG.</text>
</comment>
<comment type="subcellular location">
    <subcellularLocation>
        <location evidence="1">Cell inner membrane</location>
        <topology evidence="1">Multi-pass membrane protein</topology>
    </subcellularLocation>
</comment>
<comment type="similarity">
    <text evidence="1">Belongs to the NqrDE/RnfAE family.</text>
</comment>
<sequence length="193" mass="20782">MTEYLLLFVGTVLVNNFVLVKFLGLCPFMGVSKKLETAIGMGLATTFVLTLASVCAWMVNSFILLPLGLIYLRTLAFILVIAVVVQFTELVVRKTSPTLYRLLGIFLPLITTNCAVLGVALLNVNQSHNFMQSAVYGFSAAAGFSLVMVLFAAIRERLAVADVPAPFRGSSIALITAGLMSLAFMGFTGLVKF</sequence>
<reference key="1">
    <citation type="journal article" date="2006" name="J. Bacteriol.">
        <title>Complete genome sequence of Yersinia pestis strains Antiqua and Nepal516: evidence of gene reduction in an emerging pathogen.</title>
        <authorList>
            <person name="Chain P.S.G."/>
            <person name="Hu P."/>
            <person name="Malfatti S.A."/>
            <person name="Radnedge L."/>
            <person name="Larimer F."/>
            <person name="Vergez L.M."/>
            <person name="Worsham P."/>
            <person name="Chu M.C."/>
            <person name="Andersen G.L."/>
        </authorList>
    </citation>
    <scope>NUCLEOTIDE SEQUENCE [LARGE SCALE GENOMIC DNA]</scope>
    <source>
        <strain>Nepal516</strain>
    </source>
</reference>
<reference key="2">
    <citation type="submission" date="2009-04" db="EMBL/GenBank/DDBJ databases">
        <title>Yersinia pestis Nepal516A whole genome shotgun sequencing project.</title>
        <authorList>
            <person name="Plunkett G. III"/>
            <person name="Anderson B.D."/>
            <person name="Baumler D.J."/>
            <person name="Burland V."/>
            <person name="Cabot E.L."/>
            <person name="Glasner J.D."/>
            <person name="Mau B."/>
            <person name="Neeno-Eckwall E."/>
            <person name="Perna N.T."/>
            <person name="Munk A.C."/>
            <person name="Tapia R."/>
            <person name="Green L.D."/>
            <person name="Rogers Y.C."/>
            <person name="Detter J.C."/>
            <person name="Bruce D.C."/>
            <person name="Brettin T.S."/>
        </authorList>
    </citation>
    <scope>NUCLEOTIDE SEQUENCE [LARGE SCALE GENOMIC DNA]</scope>
    <source>
        <strain>Nepal516</strain>
    </source>
</reference>
<proteinExistence type="inferred from homology"/>
<protein>
    <recommendedName>
        <fullName evidence="1">Ion-translocating oxidoreductase complex subunit A</fullName>
        <ecNumber evidence="1">7.-.-.-</ecNumber>
    </recommendedName>
    <alternativeName>
        <fullName evidence="1">Rnf electron transport complex subunit A</fullName>
    </alternativeName>
</protein>
<dbReference type="EC" id="7.-.-.-" evidence="1"/>
<dbReference type="EMBL" id="CP000305">
    <property type="protein sequence ID" value="ABG18043.1"/>
    <property type="molecule type" value="Genomic_DNA"/>
</dbReference>
<dbReference type="EMBL" id="ACNQ01000009">
    <property type="protein sequence ID" value="EEO77170.1"/>
    <property type="molecule type" value="Genomic_DNA"/>
</dbReference>
<dbReference type="SMR" id="Q1CIY7"/>
<dbReference type="KEGG" id="ypn:YPN_1714"/>
<dbReference type="HOGENOM" id="CLU_095255_1_0_6"/>
<dbReference type="Proteomes" id="UP000008936">
    <property type="component" value="Chromosome"/>
</dbReference>
<dbReference type="GO" id="GO:0005886">
    <property type="term" value="C:plasma membrane"/>
    <property type="evidence" value="ECO:0007669"/>
    <property type="project" value="UniProtKB-SubCell"/>
</dbReference>
<dbReference type="GO" id="GO:0022900">
    <property type="term" value="P:electron transport chain"/>
    <property type="evidence" value="ECO:0007669"/>
    <property type="project" value="UniProtKB-UniRule"/>
</dbReference>
<dbReference type="HAMAP" id="MF_00459">
    <property type="entry name" value="RsxA_RnfA"/>
    <property type="match status" value="1"/>
</dbReference>
<dbReference type="InterPro" id="IPR011293">
    <property type="entry name" value="Ion_transpt_RnfA/RsxA"/>
</dbReference>
<dbReference type="InterPro" id="IPR003667">
    <property type="entry name" value="NqrDE/RnfAE"/>
</dbReference>
<dbReference type="InterPro" id="IPR050133">
    <property type="entry name" value="NqrDE/RnfAE_oxidrdctase"/>
</dbReference>
<dbReference type="NCBIfam" id="NF003481">
    <property type="entry name" value="PRK05151.1"/>
    <property type="match status" value="1"/>
</dbReference>
<dbReference type="NCBIfam" id="TIGR01943">
    <property type="entry name" value="rnfA"/>
    <property type="match status" value="1"/>
</dbReference>
<dbReference type="PANTHER" id="PTHR30335">
    <property type="entry name" value="INTEGRAL MEMBRANE PROTEIN OF SOXR-REDUCING COMPLEX"/>
    <property type="match status" value="1"/>
</dbReference>
<dbReference type="PANTHER" id="PTHR30335:SF0">
    <property type="entry name" value="ION-TRANSLOCATING OXIDOREDUCTASE COMPLEX SUBUNIT A"/>
    <property type="match status" value="1"/>
</dbReference>
<dbReference type="Pfam" id="PF02508">
    <property type="entry name" value="Rnf-Nqr"/>
    <property type="match status" value="1"/>
</dbReference>
<dbReference type="PIRSF" id="PIRSF006102">
    <property type="entry name" value="NQR_DE"/>
    <property type="match status" value="1"/>
</dbReference>
<gene>
    <name evidence="1" type="primary">rnfA</name>
    <name type="ordered locus">YPN_1714</name>
    <name type="ORF">YP516_1905</name>
</gene>
<name>RNFA_YERPN</name>
<organism>
    <name type="scientific">Yersinia pestis bv. Antiqua (strain Nepal516)</name>
    <dbReference type="NCBI Taxonomy" id="377628"/>
    <lineage>
        <taxon>Bacteria</taxon>
        <taxon>Pseudomonadati</taxon>
        <taxon>Pseudomonadota</taxon>
        <taxon>Gammaproteobacteria</taxon>
        <taxon>Enterobacterales</taxon>
        <taxon>Yersiniaceae</taxon>
        <taxon>Yersinia</taxon>
    </lineage>
</organism>
<evidence type="ECO:0000255" key="1">
    <source>
        <dbReference type="HAMAP-Rule" id="MF_00459"/>
    </source>
</evidence>
<feature type="chain" id="PRO_1000013566" description="Ion-translocating oxidoreductase complex subunit A">
    <location>
        <begin position="1"/>
        <end position="193"/>
    </location>
</feature>
<feature type="transmembrane region" description="Helical" evidence="1">
    <location>
        <begin position="5"/>
        <end position="25"/>
    </location>
</feature>
<feature type="transmembrane region" description="Helical" evidence="1">
    <location>
        <begin position="39"/>
        <end position="59"/>
    </location>
</feature>
<feature type="transmembrane region" description="Helical" evidence="1">
    <location>
        <begin position="62"/>
        <end position="82"/>
    </location>
</feature>
<feature type="transmembrane region" description="Helical" evidence="1">
    <location>
        <begin position="102"/>
        <end position="122"/>
    </location>
</feature>
<feature type="transmembrane region" description="Helical" evidence="1">
    <location>
        <begin position="134"/>
        <end position="154"/>
    </location>
</feature>
<feature type="transmembrane region" description="Helical" evidence="1">
    <location>
        <begin position="171"/>
        <end position="191"/>
    </location>
</feature>
<keyword id="KW-0997">Cell inner membrane</keyword>
<keyword id="KW-1003">Cell membrane</keyword>
<keyword id="KW-0249">Electron transport</keyword>
<keyword id="KW-0472">Membrane</keyword>
<keyword id="KW-1278">Translocase</keyword>
<keyword id="KW-0812">Transmembrane</keyword>
<keyword id="KW-1133">Transmembrane helix</keyword>
<keyword id="KW-0813">Transport</keyword>